<feature type="chain" id="PRO_0000388495" description="Sulfite reductase [NADPH] hemoprotein beta-component">
    <location>
        <begin position="1"/>
        <end position="612"/>
    </location>
</feature>
<feature type="region of interest" description="Disordered" evidence="2">
    <location>
        <begin position="1"/>
        <end position="26"/>
    </location>
</feature>
<feature type="binding site" evidence="1">
    <location>
        <position position="469"/>
    </location>
    <ligand>
        <name>[4Fe-4S] cluster</name>
        <dbReference type="ChEBI" id="CHEBI:49883"/>
    </ligand>
</feature>
<feature type="binding site" evidence="1">
    <location>
        <position position="475"/>
    </location>
    <ligand>
        <name>[4Fe-4S] cluster</name>
        <dbReference type="ChEBI" id="CHEBI:49883"/>
    </ligand>
</feature>
<feature type="binding site" evidence="1">
    <location>
        <position position="514"/>
    </location>
    <ligand>
        <name>[4Fe-4S] cluster</name>
        <dbReference type="ChEBI" id="CHEBI:49883"/>
    </ligand>
</feature>
<feature type="binding site" evidence="1">
    <location>
        <position position="518"/>
    </location>
    <ligand>
        <name>[4Fe-4S] cluster</name>
        <dbReference type="ChEBI" id="CHEBI:49883"/>
    </ligand>
</feature>
<feature type="binding site" description="axial binding residue" evidence="1">
    <location>
        <position position="518"/>
    </location>
    <ligand>
        <name>siroheme</name>
        <dbReference type="ChEBI" id="CHEBI:60052"/>
    </ligand>
    <ligandPart>
        <name>Fe</name>
        <dbReference type="ChEBI" id="CHEBI:18248"/>
    </ligandPart>
</feature>
<proteinExistence type="inferred from homology"/>
<reference key="1">
    <citation type="submission" date="2007-12" db="EMBL/GenBank/DDBJ databases">
        <title>Complete sequence of Methylobacterium extorquens PA1.</title>
        <authorList>
            <consortium name="US DOE Joint Genome Institute"/>
            <person name="Copeland A."/>
            <person name="Lucas S."/>
            <person name="Lapidus A."/>
            <person name="Barry K."/>
            <person name="Glavina del Rio T."/>
            <person name="Dalin E."/>
            <person name="Tice H."/>
            <person name="Pitluck S."/>
            <person name="Saunders E."/>
            <person name="Brettin T."/>
            <person name="Bruce D."/>
            <person name="Detter J.C."/>
            <person name="Han C."/>
            <person name="Schmutz J."/>
            <person name="Larimer F."/>
            <person name="Land M."/>
            <person name="Hauser L."/>
            <person name="Kyrpides N."/>
            <person name="Kim E."/>
            <person name="Marx C."/>
            <person name="Richardson P."/>
        </authorList>
    </citation>
    <scope>NUCLEOTIDE SEQUENCE [LARGE SCALE GENOMIC DNA]</scope>
    <source>
        <strain>PA1</strain>
    </source>
</reference>
<protein>
    <recommendedName>
        <fullName evidence="1">Sulfite reductase [NADPH] hemoprotein beta-component</fullName>
        <shortName evidence="1">SiR-HP</shortName>
        <shortName evidence="1">SiRHP</shortName>
        <ecNumber evidence="1">1.8.1.2</ecNumber>
    </recommendedName>
</protein>
<evidence type="ECO:0000255" key="1">
    <source>
        <dbReference type="HAMAP-Rule" id="MF_01540"/>
    </source>
</evidence>
<evidence type="ECO:0000256" key="2">
    <source>
        <dbReference type="SAM" id="MobiDB-lite"/>
    </source>
</evidence>
<evidence type="ECO:0000305" key="3"/>
<sequence length="612" mass="66792">MDDHKPIETPDGPAVDTPGIGARRYETPPTELPITEAEAARAAGLAHNEHLKIASGYLRGGLADGLLKHATGAISEDDGQLVKFHGMYMQDDRDIRAERTKKKLEKAYSFMIRLRIAGGVVTPKQWLILDNIATTYAGSALRATTRQTFQYHGVIKSNLKRTMAAIDSALLDTIAACGDVNRNVMAATNPAQAGAHKIALQLAKDISDTLLPKTGAWREIWLDGERVVGGEDAAEVEPVYGKTYLPRKFKTVVAVPPSNEVDIFAHDLGFIAILDKKNRVTGWNVTVGGGMGMTHGETDTFPRTADVLGFVQPEDALKAAEAVMTVQRDWGNRKNRKNARLKYTIERFGLDAFRAEVEKRIGKKLGAPKPFTFDGNGDRYGWVEGDDGRHHLTLYVPSGRIKDIEGGPQFLSGLRRIAEVHEGDFRLTGNQNVIIANVPAGKRAEIDALVDEYGLTRGASALRRNSMACVALPTCGLALAESERYLPDLLSELEESLARHGLQDEPITIRSTGCPNGCARPFISEIGLVGRGPERYHLYLGAAFDGSRLSKLYREDVTASEIKGTLDPLFAAYAKDRQPGEHFGDFVIRAGFVAKTSNGPDFHERTGPLRAA</sequence>
<accession>A9W4X6</accession>
<keyword id="KW-0004">4Fe-4S</keyword>
<keyword id="KW-0028">Amino-acid biosynthesis</keyword>
<keyword id="KW-0198">Cysteine biosynthesis</keyword>
<keyword id="KW-0349">Heme</keyword>
<keyword id="KW-0408">Iron</keyword>
<keyword id="KW-0411">Iron-sulfur</keyword>
<keyword id="KW-0479">Metal-binding</keyword>
<keyword id="KW-0521">NADP</keyword>
<keyword id="KW-0560">Oxidoreductase</keyword>
<organism>
    <name type="scientific">Methylorubrum extorquens (strain PA1)</name>
    <name type="common">Methylobacterium extorquens</name>
    <dbReference type="NCBI Taxonomy" id="419610"/>
    <lineage>
        <taxon>Bacteria</taxon>
        <taxon>Pseudomonadati</taxon>
        <taxon>Pseudomonadota</taxon>
        <taxon>Alphaproteobacteria</taxon>
        <taxon>Hyphomicrobiales</taxon>
        <taxon>Methylobacteriaceae</taxon>
        <taxon>Methylorubrum</taxon>
    </lineage>
</organism>
<name>CYSI_METEP</name>
<comment type="function">
    <text evidence="1">Component of the sulfite reductase complex that catalyzes the 6-electron reduction of sulfite to sulfide. This is one of several activities required for the biosynthesis of L-cysteine from sulfate.</text>
</comment>
<comment type="catalytic activity">
    <reaction evidence="1">
        <text>hydrogen sulfide + 3 NADP(+) + 3 H2O = sulfite + 3 NADPH + 4 H(+)</text>
        <dbReference type="Rhea" id="RHEA:13801"/>
        <dbReference type="ChEBI" id="CHEBI:15377"/>
        <dbReference type="ChEBI" id="CHEBI:15378"/>
        <dbReference type="ChEBI" id="CHEBI:17359"/>
        <dbReference type="ChEBI" id="CHEBI:29919"/>
        <dbReference type="ChEBI" id="CHEBI:57783"/>
        <dbReference type="ChEBI" id="CHEBI:58349"/>
        <dbReference type="EC" id="1.8.1.2"/>
    </reaction>
</comment>
<comment type="cofactor">
    <cofactor evidence="1">
        <name>siroheme</name>
        <dbReference type="ChEBI" id="CHEBI:60052"/>
    </cofactor>
    <text evidence="1">Binds 1 siroheme per subunit.</text>
</comment>
<comment type="cofactor">
    <cofactor evidence="1">
        <name>[4Fe-4S] cluster</name>
        <dbReference type="ChEBI" id="CHEBI:49883"/>
    </cofactor>
    <text evidence="1">Binds 1 [4Fe-4S] cluster per subunit.</text>
</comment>
<comment type="pathway">
    <text evidence="1">Sulfur metabolism; hydrogen sulfide biosynthesis; hydrogen sulfide from sulfite (NADPH route): step 1/1.</text>
</comment>
<comment type="subunit">
    <text evidence="1">Alpha(8)-beta(8). The alpha component is a flavoprotein, the beta component is a hemoprotein.</text>
</comment>
<comment type="similarity">
    <text evidence="1">Belongs to the nitrite and sulfite reductase 4Fe-4S domain family.</text>
</comment>
<comment type="sequence caution" evidence="3">
    <conflict type="erroneous initiation">
        <sequence resource="EMBL-CDS" id="ABY30632"/>
    </conflict>
</comment>
<dbReference type="EC" id="1.8.1.2" evidence="1"/>
<dbReference type="EMBL" id="CP000908">
    <property type="protein sequence ID" value="ABY30632.1"/>
    <property type="status" value="ALT_INIT"/>
    <property type="molecule type" value="Genomic_DNA"/>
</dbReference>
<dbReference type="RefSeq" id="WP_042508826.1">
    <property type="nucleotide sequence ID" value="NC_010172.1"/>
</dbReference>
<dbReference type="SMR" id="A9W4X6"/>
<dbReference type="KEGG" id="mex:Mext_2237"/>
<dbReference type="eggNOG" id="COG0155">
    <property type="taxonomic scope" value="Bacteria"/>
</dbReference>
<dbReference type="HOGENOM" id="CLU_001975_3_2_5"/>
<dbReference type="BioCyc" id="MEXT419610:MEXT_RS11285-MONOMER"/>
<dbReference type="UniPathway" id="UPA00140">
    <property type="reaction ID" value="UER00207"/>
</dbReference>
<dbReference type="GO" id="GO:0009337">
    <property type="term" value="C:sulfite reductase complex (NADPH)"/>
    <property type="evidence" value="ECO:0007669"/>
    <property type="project" value="InterPro"/>
</dbReference>
<dbReference type="GO" id="GO:0051539">
    <property type="term" value="F:4 iron, 4 sulfur cluster binding"/>
    <property type="evidence" value="ECO:0007669"/>
    <property type="project" value="UniProtKB-KW"/>
</dbReference>
<dbReference type="GO" id="GO:0020037">
    <property type="term" value="F:heme binding"/>
    <property type="evidence" value="ECO:0007669"/>
    <property type="project" value="InterPro"/>
</dbReference>
<dbReference type="GO" id="GO:0046872">
    <property type="term" value="F:metal ion binding"/>
    <property type="evidence" value="ECO:0007669"/>
    <property type="project" value="UniProtKB-KW"/>
</dbReference>
<dbReference type="GO" id="GO:0050661">
    <property type="term" value="F:NADP binding"/>
    <property type="evidence" value="ECO:0007669"/>
    <property type="project" value="InterPro"/>
</dbReference>
<dbReference type="GO" id="GO:0050311">
    <property type="term" value="F:sulfite reductase (ferredoxin) activity"/>
    <property type="evidence" value="ECO:0007669"/>
    <property type="project" value="TreeGrafter"/>
</dbReference>
<dbReference type="GO" id="GO:0004783">
    <property type="term" value="F:sulfite reductase (NADPH) activity"/>
    <property type="evidence" value="ECO:0007669"/>
    <property type="project" value="UniProtKB-UniRule"/>
</dbReference>
<dbReference type="GO" id="GO:0019344">
    <property type="term" value="P:cysteine biosynthetic process"/>
    <property type="evidence" value="ECO:0007669"/>
    <property type="project" value="UniProtKB-KW"/>
</dbReference>
<dbReference type="GO" id="GO:0070814">
    <property type="term" value="P:hydrogen sulfide biosynthetic process"/>
    <property type="evidence" value="ECO:0007669"/>
    <property type="project" value="UniProtKB-UniRule"/>
</dbReference>
<dbReference type="GO" id="GO:0000103">
    <property type="term" value="P:sulfate assimilation"/>
    <property type="evidence" value="ECO:0007669"/>
    <property type="project" value="UniProtKB-UniRule"/>
</dbReference>
<dbReference type="FunFam" id="3.30.413.10:FF:000003">
    <property type="entry name" value="Sulfite reductase [NADPH] hemoprotein beta-component"/>
    <property type="match status" value="1"/>
</dbReference>
<dbReference type="FunFam" id="3.30.413.10:FF:000004">
    <property type="entry name" value="Sulfite reductase [NADPH] hemoprotein beta-component"/>
    <property type="match status" value="1"/>
</dbReference>
<dbReference type="Gene3D" id="3.30.413.10">
    <property type="entry name" value="Sulfite Reductase Hemoprotein, domain 1"/>
    <property type="match status" value="2"/>
</dbReference>
<dbReference type="HAMAP" id="MF_01540">
    <property type="entry name" value="CysI"/>
    <property type="match status" value="1"/>
</dbReference>
<dbReference type="InterPro" id="IPR011786">
    <property type="entry name" value="CysI"/>
</dbReference>
<dbReference type="InterPro" id="IPR005117">
    <property type="entry name" value="NiRdtase/SiRdtase_haem-b_fer"/>
</dbReference>
<dbReference type="InterPro" id="IPR036136">
    <property type="entry name" value="Nit/Sulf_reduc_fer-like_dom_sf"/>
</dbReference>
<dbReference type="InterPro" id="IPR006067">
    <property type="entry name" value="NO2/SO3_Rdtase_4Fe4S_dom"/>
</dbReference>
<dbReference type="InterPro" id="IPR045169">
    <property type="entry name" value="NO2/SO3_Rdtase_4Fe4S_prot"/>
</dbReference>
<dbReference type="InterPro" id="IPR045854">
    <property type="entry name" value="NO2/SO3_Rdtase_4Fe4S_sf"/>
</dbReference>
<dbReference type="InterPro" id="IPR006066">
    <property type="entry name" value="NO2/SO3_Rdtase_FeS/sirohaem_BS"/>
</dbReference>
<dbReference type="NCBIfam" id="TIGR02041">
    <property type="entry name" value="CysI"/>
    <property type="match status" value="1"/>
</dbReference>
<dbReference type="NCBIfam" id="NF010029">
    <property type="entry name" value="PRK13504.1"/>
    <property type="match status" value="1"/>
</dbReference>
<dbReference type="PANTHER" id="PTHR11493:SF47">
    <property type="entry name" value="SULFITE REDUCTASE [NADPH] SUBUNIT BETA"/>
    <property type="match status" value="1"/>
</dbReference>
<dbReference type="PANTHER" id="PTHR11493">
    <property type="entry name" value="SULFITE REDUCTASE [NADPH] SUBUNIT BETA-RELATED"/>
    <property type="match status" value="1"/>
</dbReference>
<dbReference type="Pfam" id="PF01077">
    <property type="entry name" value="NIR_SIR"/>
    <property type="match status" value="1"/>
</dbReference>
<dbReference type="Pfam" id="PF03460">
    <property type="entry name" value="NIR_SIR_ferr"/>
    <property type="match status" value="2"/>
</dbReference>
<dbReference type="PRINTS" id="PR00397">
    <property type="entry name" value="SIROHAEM"/>
</dbReference>
<dbReference type="SUPFAM" id="SSF56014">
    <property type="entry name" value="Nitrite and sulphite reductase 4Fe-4S domain-like"/>
    <property type="match status" value="2"/>
</dbReference>
<dbReference type="SUPFAM" id="SSF55124">
    <property type="entry name" value="Nitrite/Sulfite reductase N-terminal domain-like"/>
    <property type="match status" value="2"/>
</dbReference>
<dbReference type="PROSITE" id="PS00365">
    <property type="entry name" value="NIR_SIR"/>
    <property type="match status" value="1"/>
</dbReference>
<gene>
    <name evidence="1" type="primary">cysI</name>
    <name type="ordered locus">Mext_2237</name>
</gene>